<comment type="function">
    <text evidence="1">Catalyzes the phosphorylation of N-acetyl-D-glucosamine (GlcNAc) derived from cell-wall degradation, yielding GlcNAc-6-P.</text>
</comment>
<comment type="catalytic activity">
    <reaction evidence="1">
        <text>N-acetyl-D-glucosamine + ATP = N-acetyl-D-glucosamine 6-phosphate + ADP + H(+)</text>
        <dbReference type="Rhea" id="RHEA:17417"/>
        <dbReference type="ChEBI" id="CHEBI:15378"/>
        <dbReference type="ChEBI" id="CHEBI:30616"/>
        <dbReference type="ChEBI" id="CHEBI:57513"/>
        <dbReference type="ChEBI" id="CHEBI:456216"/>
        <dbReference type="ChEBI" id="CHEBI:506227"/>
        <dbReference type="EC" id="2.7.1.59"/>
    </reaction>
</comment>
<comment type="pathway">
    <text evidence="1">Cell wall biogenesis; peptidoglycan recycling.</text>
</comment>
<comment type="similarity">
    <text evidence="1">Belongs to the ROK (NagC/XylR) family. NagK subfamily.</text>
</comment>
<feature type="chain" id="PRO_1000140196" description="N-acetyl-D-glucosamine kinase">
    <location>
        <begin position="1"/>
        <end position="303"/>
    </location>
</feature>
<feature type="binding site" evidence="1">
    <location>
        <begin position="4"/>
        <end position="11"/>
    </location>
    <ligand>
        <name>ATP</name>
        <dbReference type="ChEBI" id="CHEBI:30616"/>
    </ligand>
</feature>
<feature type="binding site" evidence="1">
    <location>
        <begin position="133"/>
        <end position="140"/>
    </location>
    <ligand>
        <name>ATP</name>
        <dbReference type="ChEBI" id="CHEBI:30616"/>
    </ligand>
</feature>
<feature type="binding site" evidence="1">
    <location>
        <position position="157"/>
    </location>
    <ligand>
        <name>Zn(2+)</name>
        <dbReference type="ChEBI" id="CHEBI:29105"/>
    </ligand>
</feature>
<feature type="binding site" evidence="1">
    <location>
        <position position="177"/>
    </location>
    <ligand>
        <name>Zn(2+)</name>
        <dbReference type="ChEBI" id="CHEBI:29105"/>
    </ligand>
</feature>
<feature type="binding site" evidence="1">
    <location>
        <position position="179"/>
    </location>
    <ligand>
        <name>Zn(2+)</name>
        <dbReference type="ChEBI" id="CHEBI:29105"/>
    </ligand>
</feature>
<feature type="binding site" evidence="1">
    <location>
        <position position="184"/>
    </location>
    <ligand>
        <name>Zn(2+)</name>
        <dbReference type="ChEBI" id="CHEBI:29105"/>
    </ligand>
</feature>
<gene>
    <name evidence="1" type="primary">nagK</name>
    <name type="ordered locus">SSPA1515</name>
</gene>
<protein>
    <recommendedName>
        <fullName evidence="1">N-acetyl-D-glucosamine kinase</fullName>
        <ecNumber evidence="1">2.7.1.59</ecNumber>
    </recommendedName>
    <alternativeName>
        <fullName evidence="1">GlcNAc kinase</fullName>
    </alternativeName>
</protein>
<keyword id="KW-0067">ATP-binding</keyword>
<keyword id="KW-0119">Carbohydrate metabolism</keyword>
<keyword id="KW-0418">Kinase</keyword>
<keyword id="KW-0479">Metal-binding</keyword>
<keyword id="KW-0547">Nucleotide-binding</keyword>
<keyword id="KW-0808">Transferase</keyword>
<keyword id="KW-0862">Zinc</keyword>
<sequence length="303" mass="32964">MYYGFDIGGTKIALGVFDSTRRLQWEKRVPTPHASYGAFLDAVCELVAEADQRFGVKGSVGIGIPGMPETEDGTLYAANVPAASGKPLRADLSARLDRDVRLDNDANCFALSEAWDDEFTQYPLVMGLILGTGVGGGLVLNGKPITGQSYITGEFGHMRLPVDALTLMGFDFPLRRCGCGQMGCIENYLSGRGFAWLYQHYYHQSLQAPEIIALWEQGDEQAHAHVERYLDLLAVCLGNILTIVDPDLLVIGGGLSNFTAITTQLAERLPRHLLPVARAPRIERARHGDAGGMRGAAFLHLTD</sequence>
<dbReference type="EC" id="2.7.1.59" evidence="1"/>
<dbReference type="EMBL" id="FM200053">
    <property type="protein sequence ID" value="CAR59698.1"/>
    <property type="molecule type" value="Genomic_DNA"/>
</dbReference>
<dbReference type="RefSeq" id="WP_000291319.1">
    <property type="nucleotide sequence ID" value="NC_011147.1"/>
</dbReference>
<dbReference type="SMR" id="B5BAF5"/>
<dbReference type="KEGG" id="sek:SSPA1515"/>
<dbReference type="HOGENOM" id="CLU_036604_0_3_6"/>
<dbReference type="UniPathway" id="UPA00544"/>
<dbReference type="Proteomes" id="UP000001869">
    <property type="component" value="Chromosome"/>
</dbReference>
<dbReference type="GO" id="GO:0005524">
    <property type="term" value="F:ATP binding"/>
    <property type="evidence" value="ECO:0007669"/>
    <property type="project" value="UniProtKB-UniRule"/>
</dbReference>
<dbReference type="GO" id="GO:0045127">
    <property type="term" value="F:N-acetylglucosamine kinase activity"/>
    <property type="evidence" value="ECO:0007669"/>
    <property type="project" value="UniProtKB-UniRule"/>
</dbReference>
<dbReference type="GO" id="GO:0008270">
    <property type="term" value="F:zinc ion binding"/>
    <property type="evidence" value="ECO:0007669"/>
    <property type="project" value="UniProtKB-UniRule"/>
</dbReference>
<dbReference type="GO" id="GO:0006044">
    <property type="term" value="P:N-acetylglucosamine metabolic process"/>
    <property type="evidence" value="ECO:0007669"/>
    <property type="project" value="UniProtKB-UniRule"/>
</dbReference>
<dbReference type="GO" id="GO:0009254">
    <property type="term" value="P:peptidoglycan turnover"/>
    <property type="evidence" value="ECO:0007669"/>
    <property type="project" value="UniProtKB-UniRule"/>
</dbReference>
<dbReference type="CDD" id="cd24057">
    <property type="entry name" value="ASKHA_NBD_ROK_NAGK"/>
    <property type="match status" value="1"/>
</dbReference>
<dbReference type="FunFam" id="3.30.420.40:FF:000049">
    <property type="entry name" value="N-acetyl-D-glucosamine kinase"/>
    <property type="match status" value="1"/>
</dbReference>
<dbReference type="FunFam" id="3.30.420.40:FF:000051">
    <property type="entry name" value="N-acetyl-D-glucosamine kinase"/>
    <property type="match status" value="1"/>
</dbReference>
<dbReference type="Gene3D" id="3.30.420.40">
    <property type="match status" value="2"/>
</dbReference>
<dbReference type="HAMAP" id="MF_01271">
    <property type="entry name" value="GlcNAc_kinase"/>
    <property type="match status" value="1"/>
</dbReference>
<dbReference type="InterPro" id="IPR043129">
    <property type="entry name" value="ATPase_NBD"/>
</dbReference>
<dbReference type="InterPro" id="IPR023505">
    <property type="entry name" value="N-acetyl-D-glucosamine_kinase"/>
</dbReference>
<dbReference type="InterPro" id="IPR000600">
    <property type="entry name" value="ROK"/>
</dbReference>
<dbReference type="InterPro" id="IPR049874">
    <property type="entry name" value="ROK_cs"/>
</dbReference>
<dbReference type="NCBIfam" id="NF009835">
    <property type="entry name" value="PRK13310.1"/>
    <property type="match status" value="1"/>
</dbReference>
<dbReference type="PANTHER" id="PTHR18964:SF162">
    <property type="entry name" value="N-ACETYL-D-GLUCOSAMINE KINASE"/>
    <property type="match status" value="1"/>
</dbReference>
<dbReference type="PANTHER" id="PTHR18964">
    <property type="entry name" value="ROK (REPRESSOR, ORF, KINASE) FAMILY"/>
    <property type="match status" value="1"/>
</dbReference>
<dbReference type="Pfam" id="PF00480">
    <property type="entry name" value="ROK"/>
    <property type="match status" value="1"/>
</dbReference>
<dbReference type="SUPFAM" id="SSF53067">
    <property type="entry name" value="Actin-like ATPase domain"/>
    <property type="match status" value="1"/>
</dbReference>
<dbReference type="PROSITE" id="PS01125">
    <property type="entry name" value="ROK"/>
    <property type="match status" value="1"/>
</dbReference>
<name>NAGK_SALPK</name>
<organism>
    <name type="scientific">Salmonella paratyphi A (strain AKU_12601)</name>
    <dbReference type="NCBI Taxonomy" id="554290"/>
    <lineage>
        <taxon>Bacteria</taxon>
        <taxon>Pseudomonadati</taxon>
        <taxon>Pseudomonadota</taxon>
        <taxon>Gammaproteobacteria</taxon>
        <taxon>Enterobacterales</taxon>
        <taxon>Enterobacteriaceae</taxon>
        <taxon>Salmonella</taxon>
    </lineage>
</organism>
<accession>B5BAF5</accession>
<proteinExistence type="inferred from homology"/>
<reference key="1">
    <citation type="journal article" date="2009" name="BMC Genomics">
        <title>Pseudogene accumulation in the evolutionary histories of Salmonella enterica serovars Paratyphi A and Typhi.</title>
        <authorList>
            <person name="Holt K.E."/>
            <person name="Thomson N.R."/>
            <person name="Wain J."/>
            <person name="Langridge G.C."/>
            <person name="Hasan R."/>
            <person name="Bhutta Z.A."/>
            <person name="Quail M.A."/>
            <person name="Norbertczak H."/>
            <person name="Walker D."/>
            <person name="Simmonds M."/>
            <person name="White B."/>
            <person name="Bason N."/>
            <person name="Mungall K."/>
            <person name="Dougan G."/>
            <person name="Parkhill J."/>
        </authorList>
    </citation>
    <scope>NUCLEOTIDE SEQUENCE [LARGE SCALE GENOMIC DNA]</scope>
    <source>
        <strain>AKU_12601</strain>
    </source>
</reference>
<evidence type="ECO:0000255" key="1">
    <source>
        <dbReference type="HAMAP-Rule" id="MF_01271"/>
    </source>
</evidence>